<organism>
    <name type="scientific">Synechococcus sp. (strain CC9605)</name>
    <dbReference type="NCBI Taxonomy" id="110662"/>
    <lineage>
        <taxon>Bacteria</taxon>
        <taxon>Bacillati</taxon>
        <taxon>Cyanobacteriota</taxon>
        <taxon>Cyanophyceae</taxon>
        <taxon>Synechococcales</taxon>
        <taxon>Synechococcaceae</taxon>
        <taxon>Synechococcus</taxon>
    </lineage>
</organism>
<comment type="function">
    <text evidence="1">Catalyzes the ATP-dependent amination of UTP to CTP with either L-glutamine or ammonia as the source of nitrogen. Regulates intracellular CTP levels through interactions with the four ribonucleotide triphosphates.</text>
</comment>
<comment type="catalytic activity">
    <reaction evidence="1">
        <text>UTP + L-glutamine + ATP + H2O = CTP + L-glutamate + ADP + phosphate + 2 H(+)</text>
        <dbReference type="Rhea" id="RHEA:26426"/>
        <dbReference type="ChEBI" id="CHEBI:15377"/>
        <dbReference type="ChEBI" id="CHEBI:15378"/>
        <dbReference type="ChEBI" id="CHEBI:29985"/>
        <dbReference type="ChEBI" id="CHEBI:30616"/>
        <dbReference type="ChEBI" id="CHEBI:37563"/>
        <dbReference type="ChEBI" id="CHEBI:43474"/>
        <dbReference type="ChEBI" id="CHEBI:46398"/>
        <dbReference type="ChEBI" id="CHEBI:58359"/>
        <dbReference type="ChEBI" id="CHEBI:456216"/>
        <dbReference type="EC" id="6.3.4.2"/>
    </reaction>
</comment>
<comment type="catalytic activity">
    <reaction evidence="1">
        <text>L-glutamine + H2O = L-glutamate + NH4(+)</text>
        <dbReference type="Rhea" id="RHEA:15889"/>
        <dbReference type="ChEBI" id="CHEBI:15377"/>
        <dbReference type="ChEBI" id="CHEBI:28938"/>
        <dbReference type="ChEBI" id="CHEBI:29985"/>
        <dbReference type="ChEBI" id="CHEBI:58359"/>
    </reaction>
</comment>
<comment type="catalytic activity">
    <reaction evidence="1">
        <text>UTP + NH4(+) + ATP = CTP + ADP + phosphate + 2 H(+)</text>
        <dbReference type="Rhea" id="RHEA:16597"/>
        <dbReference type="ChEBI" id="CHEBI:15378"/>
        <dbReference type="ChEBI" id="CHEBI:28938"/>
        <dbReference type="ChEBI" id="CHEBI:30616"/>
        <dbReference type="ChEBI" id="CHEBI:37563"/>
        <dbReference type="ChEBI" id="CHEBI:43474"/>
        <dbReference type="ChEBI" id="CHEBI:46398"/>
        <dbReference type="ChEBI" id="CHEBI:456216"/>
    </reaction>
</comment>
<comment type="activity regulation">
    <text evidence="1">Allosterically activated by GTP, when glutamine is the substrate; GTP has no effect on the reaction when ammonia is the substrate. The allosteric effector GTP functions by stabilizing the protein conformation that binds the tetrahedral intermediate(s) formed during glutamine hydrolysis. Inhibited by the product CTP, via allosteric rather than competitive inhibition.</text>
</comment>
<comment type="pathway">
    <text evidence="1">Pyrimidine metabolism; CTP biosynthesis via de novo pathway; CTP from UDP: step 2/2.</text>
</comment>
<comment type="subunit">
    <text evidence="1">Homotetramer.</text>
</comment>
<comment type="miscellaneous">
    <text evidence="1">CTPSs have evolved a hybrid strategy for distinguishing between UTP and CTP. The overlapping regions of the product feedback inhibitory and substrate sites recognize a common feature in both compounds, the triphosphate moiety. To differentiate isosteric substrate and product pyrimidine rings, an additional pocket far from the expected kinase/ligase catalytic site, specifically recognizes the cytosine and ribose portions of the product inhibitor.</text>
</comment>
<comment type="similarity">
    <text evidence="1">Belongs to the CTP synthase family.</text>
</comment>
<name>PYRG_SYNSC</name>
<keyword id="KW-0067">ATP-binding</keyword>
<keyword id="KW-0315">Glutamine amidotransferase</keyword>
<keyword id="KW-0436">Ligase</keyword>
<keyword id="KW-0460">Magnesium</keyword>
<keyword id="KW-0479">Metal-binding</keyword>
<keyword id="KW-0547">Nucleotide-binding</keyword>
<keyword id="KW-0665">Pyrimidine biosynthesis</keyword>
<reference key="1">
    <citation type="submission" date="2005-07" db="EMBL/GenBank/DDBJ databases">
        <title>Complete sequence of Synechococcus sp. CC9605.</title>
        <authorList>
            <consortium name="US DOE Joint Genome Institute"/>
            <person name="Copeland A."/>
            <person name="Lucas S."/>
            <person name="Lapidus A."/>
            <person name="Barry K."/>
            <person name="Detter J.C."/>
            <person name="Glavina T."/>
            <person name="Hammon N."/>
            <person name="Israni S."/>
            <person name="Pitluck S."/>
            <person name="Schmutz J."/>
            <person name="Martinez M."/>
            <person name="Larimer F."/>
            <person name="Land M."/>
            <person name="Kyrpides N."/>
            <person name="Ivanova N."/>
            <person name="Richardson P."/>
        </authorList>
    </citation>
    <scope>NUCLEOTIDE SEQUENCE [LARGE SCALE GENOMIC DNA]</scope>
    <source>
        <strain>CC9605</strain>
    </source>
</reference>
<protein>
    <recommendedName>
        <fullName evidence="1">CTP synthase</fullName>
        <ecNumber evidence="1">6.3.4.2</ecNumber>
    </recommendedName>
    <alternativeName>
        <fullName evidence="1">Cytidine 5'-triphosphate synthase</fullName>
    </alternativeName>
    <alternativeName>
        <fullName evidence="1">Cytidine triphosphate synthetase</fullName>
        <shortName evidence="1">CTP synthetase</shortName>
        <shortName evidence="1">CTPS</shortName>
    </alternativeName>
    <alternativeName>
        <fullName evidence="1">UTP--ammonia ligase</fullName>
    </alternativeName>
</protein>
<dbReference type="EC" id="6.3.4.2" evidence="1"/>
<dbReference type="EMBL" id="CP000110">
    <property type="protein sequence ID" value="ABB36325.1"/>
    <property type="molecule type" value="Genomic_DNA"/>
</dbReference>
<dbReference type="RefSeq" id="WP_011365520.1">
    <property type="nucleotide sequence ID" value="NC_007516.1"/>
</dbReference>
<dbReference type="SMR" id="Q3AGF7"/>
<dbReference type="STRING" id="110662.Syncc9605_2598"/>
<dbReference type="MEROPS" id="C26.964"/>
<dbReference type="KEGG" id="syd:Syncc9605_2598"/>
<dbReference type="eggNOG" id="COG0504">
    <property type="taxonomic scope" value="Bacteria"/>
</dbReference>
<dbReference type="HOGENOM" id="CLU_011675_5_0_3"/>
<dbReference type="OrthoDB" id="9801107at2"/>
<dbReference type="UniPathway" id="UPA00159">
    <property type="reaction ID" value="UER00277"/>
</dbReference>
<dbReference type="GO" id="GO:0005829">
    <property type="term" value="C:cytosol"/>
    <property type="evidence" value="ECO:0007669"/>
    <property type="project" value="TreeGrafter"/>
</dbReference>
<dbReference type="GO" id="GO:0005524">
    <property type="term" value="F:ATP binding"/>
    <property type="evidence" value="ECO:0007669"/>
    <property type="project" value="UniProtKB-KW"/>
</dbReference>
<dbReference type="GO" id="GO:0003883">
    <property type="term" value="F:CTP synthase activity"/>
    <property type="evidence" value="ECO:0007669"/>
    <property type="project" value="UniProtKB-UniRule"/>
</dbReference>
<dbReference type="GO" id="GO:0004359">
    <property type="term" value="F:glutaminase activity"/>
    <property type="evidence" value="ECO:0007669"/>
    <property type="project" value="RHEA"/>
</dbReference>
<dbReference type="GO" id="GO:0042802">
    <property type="term" value="F:identical protein binding"/>
    <property type="evidence" value="ECO:0007669"/>
    <property type="project" value="TreeGrafter"/>
</dbReference>
<dbReference type="GO" id="GO:0046872">
    <property type="term" value="F:metal ion binding"/>
    <property type="evidence" value="ECO:0007669"/>
    <property type="project" value="UniProtKB-KW"/>
</dbReference>
<dbReference type="GO" id="GO:0044210">
    <property type="term" value="P:'de novo' CTP biosynthetic process"/>
    <property type="evidence" value="ECO:0007669"/>
    <property type="project" value="UniProtKB-UniRule"/>
</dbReference>
<dbReference type="GO" id="GO:0019856">
    <property type="term" value="P:pyrimidine nucleobase biosynthetic process"/>
    <property type="evidence" value="ECO:0007669"/>
    <property type="project" value="TreeGrafter"/>
</dbReference>
<dbReference type="CDD" id="cd03113">
    <property type="entry name" value="CTPS_N"/>
    <property type="match status" value="1"/>
</dbReference>
<dbReference type="CDD" id="cd01746">
    <property type="entry name" value="GATase1_CTP_Synthase"/>
    <property type="match status" value="1"/>
</dbReference>
<dbReference type="FunFam" id="3.40.50.300:FF:000009">
    <property type="entry name" value="CTP synthase"/>
    <property type="match status" value="1"/>
</dbReference>
<dbReference type="FunFam" id="3.40.50.880:FF:000002">
    <property type="entry name" value="CTP synthase"/>
    <property type="match status" value="1"/>
</dbReference>
<dbReference type="Gene3D" id="3.40.50.880">
    <property type="match status" value="1"/>
</dbReference>
<dbReference type="Gene3D" id="3.40.50.300">
    <property type="entry name" value="P-loop containing nucleotide triphosphate hydrolases"/>
    <property type="match status" value="1"/>
</dbReference>
<dbReference type="HAMAP" id="MF_01227">
    <property type="entry name" value="PyrG"/>
    <property type="match status" value="1"/>
</dbReference>
<dbReference type="InterPro" id="IPR029062">
    <property type="entry name" value="Class_I_gatase-like"/>
</dbReference>
<dbReference type="InterPro" id="IPR004468">
    <property type="entry name" value="CTP_synthase"/>
</dbReference>
<dbReference type="InterPro" id="IPR017456">
    <property type="entry name" value="CTP_synthase_N"/>
</dbReference>
<dbReference type="InterPro" id="IPR017926">
    <property type="entry name" value="GATASE"/>
</dbReference>
<dbReference type="InterPro" id="IPR033828">
    <property type="entry name" value="GATase1_CTP_Synthase"/>
</dbReference>
<dbReference type="InterPro" id="IPR027417">
    <property type="entry name" value="P-loop_NTPase"/>
</dbReference>
<dbReference type="NCBIfam" id="NF003792">
    <property type="entry name" value="PRK05380.1"/>
    <property type="match status" value="1"/>
</dbReference>
<dbReference type="NCBIfam" id="TIGR00337">
    <property type="entry name" value="PyrG"/>
    <property type="match status" value="1"/>
</dbReference>
<dbReference type="PANTHER" id="PTHR11550">
    <property type="entry name" value="CTP SYNTHASE"/>
    <property type="match status" value="1"/>
</dbReference>
<dbReference type="PANTHER" id="PTHR11550:SF0">
    <property type="entry name" value="CTP SYNTHASE-RELATED"/>
    <property type="match status" value="1"/>
</dbReference>
<dbReference type="Pfam" id="PF06418">
    <property type="entry name" value="CTP_synth_N"/>
    <property type="match status" value="1"/>
</dbReference>
<dbReference type="Pfam" id="PF00117">
    <property type="entry name" value="GATase"/>
    <property type="match status" value="1"/>
</dbReference>
<dbReference type="SUPFAM" id="SSF52317">
    <property type="entry name" value="Class I glutamine amidotransferase-like"/>
    <property type="match status" value="1"/>
</dbReference>
<dbReference type="SUPFAM" id="SSF52540">
    <property type="entry name" value="P-loop containing nucleoside triphosphate hydrolases"/>
    <property type="match status" value="1"/>
</dbReference>
<dbReference type="PROSITE" id="PS51273">
    <property type="entry name" value="GATASE_TYPE_1"/>
    <property type="match status" value="1"/>
</dbReference>
<accession>Q3AGF7</accession>
<proteinExistence type="inferred from homology"/>
<sequence>MAKFVFITGGVVSSIGKGIVAASLGRLLKSRGYNVSILKLDPYLNVDPGTMSPFQHGEVFVTEDGAETDLDLGHYERFTDTAMSRLNSVTTGSIYQSVINKERRGDYNGGTVQVIPHITGEIRERIHRVASNSNADVVITEIGGTVGDIESLPFLEAIREFREDVGRNDLAYIHVTLLPFIGTSGELKTKPTQHSVKELRSIGIQPDVLICRSDRDISDDLKRKIGGFCGVPTRAVIPSLDADSIYAVPLILEQEGLCREVLDVLNLTDHDSDMAAWEQLVNKLRNPGPSVKIALVGKYVQLNDAYLSVVEALQHACIAQDASLDLHWVCAEQIEADGADTLLRGMDAVVVPGGFGNRGVDGKIAAIRCAREQRVPFLGLCLGMQTAVIEWARNQAGLTGATSAELDENTPHPVIHLLPEQQDVVDLGGTMRLGVYPCRIAPGTLAQRLYGDEVVYERHRHRYEFNNSYRNLFLESGYVVSGTSPDGRLVELIELKGHPFFTACQYHPEFLSRPGQPHPLFRGLIEAAQQRLPDSPAEALRQQGDIAIP</sequence>
<gene>
    <name evidence="1" type="primary">pyrG</name>
    <name type="ordered locus">Syncc9605_2598</name>
</gene>
<evidence type="ECO:0000255" key="1">
    <source>
        <dbReference type="HAMAP-Rule" id="MF_01227"/>
    </source>
</evidence>
<feature type="chain" id="PRO_0000266242" description="CTP synthase">
    <location>
        <begin position="1"/>
        <end position="549"/>
    </location>
</feature>
<feature type="domain" description="Glutamine amidotransferase type-1" evidence="1">
    <location>
        <begin position="292"/>
        <end position="534"/>
    </location>
</feature>
<feature type="region of interest" description="Amidoligase domain" evidence="1">
    <location>
        <begin position="1"/>
        <end position="267"/>
    </location>
</feature>
<feature type="active site" description="Nucleophile; for glutamine hydrolysis" evidence="1">
    <location>
        <position position="381"/>
    </location>
</feature>
<feature type="active site" evidence="1">
    <location>
        <position position="507"/>
    </location>
</feature>
<feature type="active site" evidence="1">
    <location>
        <position position="509"/>
    </location>
</feature>
<feature type="binding site" evidence="1">
    <location>
        <position position="13"/>
    </location>
    <ligand>
        <name>CTP</name>
        <dbReference type="ChEBI" id="CHEBI:37563"/>
        <note>allosteric inhibitor</note>
    </ligand>
</feature>
<feature type="binding site" evidence="1">
    <location>
        <position position="13"/>
    </location>
    <ligand>
        <name>UTP</name>
        <dbReference type="ChEBI" id="CHEBI:46398"/>
    </ligand>
</feature>
<feature type="binding site" evidence="1">
    <location>
        <begin position="14"/>
        <end position="19"/>
    </location>
    <ligand>
        <name>ATP</name>
        <dbReference type="ChEBI" id="CHEBI:30616"/>
    </ligand>
</feature>
<feature type="binding site" evidence="1">
    <location>
        <position position="71"/>
    </location>
    <ligand>
        <name>ATP</name>
        <dbReference type="ChEBI" id="CHEBI:30616"/>
    </ligand>
</feature>
<feature type="binding site" evidence="1">
    <location>
        <position position="71"/>
    </location>
    <ligand>
        <name>Mg(2+)</name>
        <dbReference type="ChEBI" id="CHEBI:18420"/>
    </ligand>
</feature>
<feature type="binding site" evidence="1">
    <location>
        <position position="141"/>
    </location>
    <ligand>
        <name>Mg(2+)</name>
        <dbReference type="ChEBI" id="CHEBI:18420"/>
    </ligand>
</feature>
<feature type="binding site" evidence="1">
    <location>
        <begin position="148"/>
        <end position="150"/>
    </location>
    <ligand>
        <name>CTP</name>
        <dbReference type="ChEBI" id="CHEBI:37563"/>
        <note>allosteric inhibitor</note>
    </ligand>
</feature>
<feature type="binding site" evidence="1">
    <location>
        <begin position="188"/>
        <end position="193"/>
    </location>
    <ligand>
        <name>CTP</name>
        <dbReference type="ChEBI" id="CHEBI:37563"/>
        <note>allosteric inhibitor</note>
    </ligand>
</feature>
<feature type="binding site" evidence="1">
    <location>
        <begin position="188"/>
        <end position="193"/>
    </location>
    <ligand>
        <name>UTP</name>
        <dbReference type="ChEBI" id="CHEBI:46398"/>
    </ligand>
</feature>
<feature type="binding site" evidence="1">
    <location>
        <position position="224"/>
    </location>
    <ligand>
        <name>CTP</name>
        <dbReference type="ChEBI" id="CHEBI:37563"/>
        <note>allosteric inhibitor</note>
    </ligand>
</feature>
<feature type="binding site" evidence="1">
    <location>
        <position position="224"/>
    </location>
    <ligand>
        <name>UTP</name>
        <dbReference type="ChEBI" id="CHEBI:46398"/>
    </ligand>
</feature>
<feature type="binding site" evidence="1">
    <location>
        <position position="354"/>
    </location>
    <ligand>
        <name>L-glutamine</name>
        <dbReference type="ChEBI" id="CHEBI:58359"/>
    </ligand>
</feature>
<feature type="binding site" evidence="1">
    <location>
        <begin position="382"/>
        <end position="385"/>
    </location>
    <ligand>
        <name>L-glutamine</name>
        <dbReference type="ChEBI" id="CHEBI:58359"/>
    </ligand>
</feature>
<feature type="binding site" evidence="1">
    <location>
        <position position="405"/>
    </location>
    <ligand>
        <name>L-glutamine</name>
        <dbReference type="ChEBI" id="CHEBI:58359"/>
    </ligand>
</feature>
<feature type="binding site" evidence="1">
    <location>
        <position position="462"/>
    </location>
    <ligand>
        <name>L-glutamine</name>
        <dbReference type="ChEBI" id="CHEBI:58359"/>
    </ligand>
</feature>